<evidence type="ECO:0000255" key="1">
    <source>
        <dbReference type="HAMAP-Rule" id="MF_01349"/>
    </source>
</evidence>
<evidence type="ECO:0000305" key="2"/>
<protein>
    <recommendedName>
        <fullName evidence="1">Bifunctional pantoate ligase/cytidylate kinase</fullName>
    </recommendedName>
    <domain>
        <recommendedName>
            <fullName evidence="1">Pantothenate synthetase</fullName>
            <shortName evidence="1">PS</shortName>
            <ecNumber evidence="1">6.3.2.1</ecNumber>
        </recommendedName>
        <alternativeName>
            <fullName evidence="1">Pantoate--beta-alanine ligase</fullName>
        </alternativeName>
        <alternativeName>
            <fullName evidence="1">Pantoate-activating enzyme</fullName>
        </alternativeName>
    </domain>
    <domain>
        <recommendedName>
            <fullName evidence="1">Cytidylate kinase</fullName>
            <shortName evidence="1">CK</shortName>
            <ecNumber evidence="1">2.7.4.25</ecNumber>
        </recommendedName>
        <alternativeName>
            <fullName evidence="1">Cytidine monophosphate kinase</fullName>
            <shortName evidence="1">CMP kinase</shortName>
        </alternativeName>
    </domain>
</protein>
<feature type="chain" id="PRO_0000131992" description="Bifunctional pantoate ligase/cytidylate kinase">
    <location>
        <begin position="1"/>
        <end position="513"/>
    </location>
</feature>
<feature type="region of interest" description="Pantoate--beta-alanine ligase" evidence="1">
    <location>
        <begin position="1"/>
        <end position="283"/>
    </location>
</feature>
<feature type="region of interest" description="Cytidylate kinase" evidence="1">
    <location>
        <begin position="284"/>
        <end position="513"/>
    </location>
</feature>
<feature type="active site" description="Proton donor" evidence="1">
    <location>
        <position position="37"/>
    </location>
</feature>
<feature type="binding site" evidence="1">
    <location>
        <begin position="30"/>
        <end position="37"/>
    </location>
    <ligand>
        <name>ATP</name>
        <dbReference type="ChEBI" id="CHEBI:30616"/>
    </ligand>
</feature>
<feature type="binding site" evidence="1">
    <location>
        <position position="61"/>
    </location>
    <ligand>
        <name>(R)-pantoate</name>
        <dbReference type="ChEBI" id="CHEBI:15980"/>
    </ligand>
</feature>
<feature type="binding site" evidence="1">
    <location>
        <position position="61"/>
    </location>
    <ligand>
        <name>beta-alanine</name>
        <dbReference type="ChEBI" id="CHEBI:57966"/>
    </ligand>
</feature>
<feature type="binding site" evidence="1">
    <location>
        <begin position="150"/>
        <end position="153"/>
    </location>
    <ligand>
        <name>ATP</name>
        <dbReference type="ChEBI" id="CHEBI:30616"/>
    </ligand>
</feature>
<feature type="binding site" evidence="1">
    <location>
        <position position="156"/>
    </location>
    <ligand>
        <name>(R)-pantoate</name>
        <dbReference type="ChEBI" id="CHEBI:15980"/>
    </ligand>
</feature>
<feature type="binding site" evidence="1">
    <location>
        <position position="179"/>
    </location>
    <ligand>
        <name>ATP</name>
        <dbReference type="ChEBI" id="CHEBI:30616"/>
    </ligand>
</feature>
<feature type="binding site" evidence="1">
    <location>
        <begin position="187"/>
        <end position="190"/>
    </location>
    <ligand>
        <name>ATP</name>
        <dbReference type="ChEBI" id="CHEBI:30616"/>
    </ligand>
</feature>
<gene>
    <name evidence="1" type="primary">panC/cmk</name>
    <name type="synonym">panC/kcy</name>
    <name type="ordered locus">sll1249</name>
</gene>
<accession>Q55074</accession>
<accession>P74087</accession>
<accession>Q55073</accession>
<sequence>MVQVFRTIAGLQTYLRQAGRGKTVGLVPTMGSLHAGHGSLLKRAVAEMDLVVLSIFVNPLQFGPGEDLEKYPRDFDGDRQWAESLGVAVIFAPTVTDLGIDAKGDQTTVLPPPAMTEVLCGAHRPGHFQGVATIVTKLFTIVCPDVAYFGAKDAQQLAIIRRLVQDLNLTVTIRSCATVREESGLAMSSRNQYLSPIEKEQATVLYRSLQAAQQRYRQGDRQVSALLTATQDVLDAEPSVQVQYLQLVEADTLQPITGTLPDQNPVLMAIAAYVGSTRLIDNLVLNHRLPIIAIDGPAGAGKSTVTRQVADGLGLTYLDTGAMYRALAWLILDQGIAPEDEPAVAELTSGAEIELMPRPAPQLTGVKVNGQDVSDAIRTPAVTQLVSTIAAQGAVRAKLLKLQRKYGDQGGIVAEGRDIGTQVFPNAELKIFLTASVQERARRRLKDFEAQGNQAVDLAQLEADIAHRDHLDSTRAIAPLQKAVDAVEIITDNLTIAEVVETIIELYKKYNKG</sequence>
<proteinExistence type="inferred from homology"/>
<dbReference type="EC" id="6.3.2.1" evidence="1"/>
<dbReference type="EC" id="2.7.4.25" evidence="1"/>
<dbReference type="EMBL" id="U44896">
    <property type="protein sequence ID" value="AAA86660.1"/>
    <property type="status" value="ALT_FRAME"/>
    <property type="molecule type" value="Genomic_DNA"/>
</dbReference>
<dbReference type="EMBL" id="U44896">
    <property type="protein sequence ID" value="AAA86661.1"/>
    <property type="molecule type" value="Genomic_DNA"/>
</dbReference>
<dbReference type="EMBL" id="BA000022">
    <property type="protein sequence ID" value="BAA18165.1"/>
    <property type="molecule type" value="Genomic_DNA"/>
</dbReference>
<dbReference type="PIR" id="S75604">
    <property type="entry name" value="S75604"/>
</dbReference>
<dbReference type="SMR" id="Q55074"/>
<dbReference type="FunCoup" id="Q55074">
    <property type="interactions" value="480"/>
</dbReference>
<dbReference type="IntAct" id="Q55074">
    <property type="interactions" value="1"/>
</dbReference>
<dbReference type="STRING" id="1148.gene:10499038"/>
<dbReference type="PaxDb" id="1148-1653250"/>
<dbReference type="EnsemblBacteria" id="BAA18165">
    <property type="protein sequence ID" value="BAA18165"/>
    <property type="gene ID" value="BAA18165"/>
</dbReference>
<dbReference type="KEGG" id="syn:sll1249"/>
<dbReference type="eggNOG" id="COG0283">
    <property type="taxonomic scope" value="Bacteria"/>
</dbReference>
<dbReference type="eggNOG" id="COG0414">
    <property type="taxonomic scope" value="Bacteria"/>
</dbReference>
<dbReference type="InParanoid" id="Q55074"/>
<dbReference type="PhylomeDB" id="Q55074"/>
<dbReference type="UniPathway" id="UPA00028">
    <property type="reaction ID" value="UER00005"/>
</dbReference>
<dbReference type="Proteomes" id="UP000001425">
    <property type="component" value="Chromosome"/>
</dbReference>
<dbReference type="GO" id="GO:0005829">
    <property type="term" value="C:cytosol"/>
    <property type="evidence" value="ECO:0000318"/>
    <property type="project" value="GO_Central"/>
</dbReference>
<dbReference type="GO" id="GO:0004127">
    <property type="term" value="F:(d)CMP kinase activity"/>
    <property type="evidence" value="ECO:0000318"/>
    <property type="project" value="GO_Central"/>
</dbReference>
<dbReference type="GO" id="GO:0005524">
    <property type="term" value="F:ATP binding"/>
    <property type="evidence" value="ECO:0007669"/>
    <property type="project" value="UniProtKB-UniRule"/>
</dbReference>
<dbReference type="GO" id="GO:0036430">
    <property type="term" value="F:CMP kinase activity"/>
    <property type="evidence" value="ECO:0007669"/>
    <property type="project" value="RHEA"/>
</dbReference>
<dbReference type="GO" id="GO:0036431">
    <property type="term" value="F:dCMP kinase activity"/>
    <property type="evidence" value="ECO:0007669"/>
    <property type="project" value="RHEA"/>
</dbReference>
<dbReference type="GO" id="GO:0004592">
    <property type="term" value="F:pantoate-beta-alanine ligase activity"/>
    <property type="evidence" value="ECO:0007669"/>
    <property type="project" value="UniProtKB-UniRule"/>
</dbReference>
<dbReference type="GO" id="GO:0015949">
    <property type="term" value="P:nucleobase-containing small molecule interconversion"/>
    <property type="evidence" value="ECO:0000318"/>
    <property type="project" value="GO_Central"/>
</dbReference>
<dbReference type="GO" id="GO:0015940">
    <property type="term" value="P:pantothenate biosynthetic process"/>
    <property type="evidence" value="ECO:0007669"/>
    <property type="project" value="UniProtKB-UniRule"/>
</dbReference>
<dbReference type="GO" id="GO:0006220">
    <property type="term" value="P:pyrimidine nucleotide metabolic process"/>
    <property type="evidence" value="ECO:0007669"/>
    <property type="project" value="UniProtKB-UniRule"/>
</dbReference>
<dbReference type="CDD" id="cd02020">
    <property type="entry name" value="CMPK"/>
    <property type="match status" value="1"/>
</dbReference>
<dbReference type="CDD" id="cd00560">
    <property type="entry name" value="PanC"/>
    <property type="match status" value="1"/>
</dbReference>
<dbReference type="FunFam" id="3.40.50.300:FF:002458">
    <property type="entry name" value="Cytidylate kinase"/>
    <property type="match status" value="1"/>
</dbReference>
<dbReference type="FunFam" id="3.30.1300.10:FF:000001">
    <property type="entry name" value="Pantothenate synthetase"/>
    <property type="match status" value="1"/>
</dbReference>
<dbReference type="Gene3D" id="3.40.50.620">
    <property type="entry name" value="HUPs"/>
    <property type="match status" value="1"/>
</dbReference>
<dbReference type="Gene3D" id="3.40.50.300">
    <property type="entry name" value="P-loop containing nucleotide triphosphate hydrolases"/>
    <property type="match status" value="1"/>
</dbReference>
<dbReference type="Gene3D" id="3.30.1300.10">
    <property type="entry name" value="Pantoate-beta-alanine ligase, C-terminal domain"/>
    <property type="match status" value="1"/>
</dbReference>
<dbReference type="HAMAP" id="MF_00238">
    <property type="entry name" value="Cytidyl_kinase_type1"/>
    <property type="match status" value="1"/>
</dbReference>
<dbReference type="HAMAP" id="MF_00158">
    <property type="entry name" value="PanC"/>
    <property type="match status" value="1"/>
</dbReference>
<dbReference type="HAMAP" id="MF_01349">
    <property type="entry name" value="PanCY"/>
    <property type="match status" value="1"/>
</dbReference>
<dbReference type="InterPro" id="IPR003136">
    <property type="entry name" value="Cytidylate_kin"/>
</dbReference>
<dbReference type="InterPro" id="IPR011994">
    <property type="entry name" value="Cytidylate_kinase_dom"/>
</dbReference>
<dbReference type="InterPro" id="IPR027417">
    <property type="entry name" value="P-loop_NTPase"/>
</dbReference>
<dbReference type="InterPro" id="IPR003721">
    <property type="entry name" value="Pantoate_ligase"/>
</dbReference>
<dbReference type="InterPro" id="IPR024894">
    <property type="entry name" value="Pantoate_ligase/cytidylate_kin"/>
</dbReference>
<dbReference type="InterPro" id="IPR042176">
    <property type="entry name" value="Pantoate_ligase_C"/>
</dbReference>
<dbReference type="InterPro" id="IPR014729">
    <property type="entry name" value="Rossmann-like_a/b/a_fold"/>
</dbReference>
<dbReference type="NCBIfam" id="TIGR00017">
    <property type="entry name" value="cmk"/>
    <property type="match status" value="1"/>
</dbReference>
<dbReference type="NCBIfam" id="TIGR00018">
    <property type="entry name" value="panC"/>
    <property type="match status" value="1"/>
</dbReference>
<dbReference type="NCBIfam" id="NF010004">
    <property type="entry name" value="PRK13477.1"/>
    <property type="match status" value="1"/>
</dbReference>
<dbReference type="PANTHER" id="PTHR21299:SF2">
    <property type="entry name" value="CYTIDYLATE KINASE"/>
    <property type="match status" value="1"/>
</dbReference>
<dbReference type="PANTHER" id="PTHR21299">
    <property type="entry name" value="CYTIDYLATE KINASE/PANTOATE-BETA-ALANINE LIGASE"/>
    <property type="match status" value="1"/>
</dbReference>
<dbReference type="Pfam" id="PF02224">
    <property type="entry name" value="Cytidylate_kin"/>
    <property type="match status" value="1"/>
</dbReference>
<dbReference type="Pfam" id="PF02569">
    <property type="entry name" value="Pantoate_ligase"/>
    <property type="match status" value="1"/>
</dbReference>
<dbReference type="SUPFAM" id="SSF52374">
    <property type="entry name" value="Nucleotidylyl transferase"/>
    <property type="match status" value="1"/>
</dbReference>
<dbReference type="SUPFAM" id="SSF52540">
    <property type="entry name" value="P-loop containing nucleoside triphosphate hydrolases"/>
    <property type="match status" value="1"/>
</dbReference>
<comment type="function">
    <text evidence="1">Catalyzes the condensation of pantoate with beta-alanine in an ATP-dependent reaction via a pantoyl-adenylate intermediate.</text>
</comment>
<comment type="function">
    <text evidence="1">Catalyzes the transfer of a phosphate group from ATP to either CMP or dCMP to form CDP or dCDP and ADP, respectively.</text>
</comment>
<comment type="catalytic activity">
    <reaction evidence="1">
        <text>(R)-pantoate + beta-alanine + ATP = (R)-pantothenate + AMP + diphosphate + H(+)</text>
        <dbReference type="Rhea" id="RHEA:10912"/>
        <dbReference type="ChEBI" id="CHEBI:15378"/>
        <dbReference type="ChEBI" id="CHEBI:15980"/>
        <dbReference type="ChEBI" id="CHEBI:29032"/>
        <dbReference type="ChEBI" id="CHEBI:30616"/>
        <dbReference type="ChEBI" id="CHEBI:33019"/>
        <dbReference type="ChEBI" id="CHEBI:57966"/>
        <dbReference type="ChEBI" id="CHEBI:456215"/>
        <dbReference type="EC" id="6.3.2.1"/>
    </reaction>
</comment>
<comment type="catalytic activity">
    <reaction evidence="1">
        <text>CMP + ATP = CDP + ADP</text>
        <dbReference type="Rhea" id="RHEA:11600"/>
        <dbReference type="ChEBI" id="CHEBI:30616"/>
        <dbReference type="ChEBI" id="CHEBI:58069"/>
        <dbReference type="ChEBI" id="CHEBI:60377"/>
        <dbReference type="ChEBI" id="CHEBI:456216"/>
        <dbReference type="EC" id="2.7.4.25"/>
    </reaction>
</comment>
<comment type="catalytic activity">
    <reaction evidence="1">
        <text>dCMP + ATP = dCDP + ADP</text>
        <dbReference type="Rhea" id="RHEA:25094"/>
        <dbReference type="ChEBI" id="CHEBI:30616"/>
        <dbReference type="ChEBI" id="CHEBI:57566"/>
        <dbReference type="ChEBI" id="CHEBI:58593"/>
        <dbReference type="ChEBI" id="CHEBI:456216"/>
        <dbReference type="EC" id="2.7.4.25"/>
    </reaction>
</comment>
<comment type="pathway">
    <text evidence="1">Cofactor biosynthesis; (R)-pantothenate biosynthesis; (R)-pantothenate from (R)-pantoate and beta-alanine: step 1/1.</text>
</comment>
<comment type="subcellular location">
    <subcellularLocation>
        <location evidence="1">Cytoplasm</location>
    </subcellularLocation>
</comment>
<comment type="similarity">
    <text evidence="1">In the N-terminal section; belongs to the pantothenate synthetase family.</text>
</comment>
<comment type="similarity">
    <text evidence="1">In the C-terminal section; belongs to the cytidylate kinase family. Type 1 subfamily.</text>
</comment>
<comment type="sequence caution" evidence="2">
    <conflict type="frameshift">
        <sequence resource="EMBL-CDS" id="AAA86660"/>
    </conflict>
</comment>
<keyword id="KW-0067">ATP-binding</keyword>
<keyword id="KW-0963">Cytoplasm</keyword>
<keyword id="KW-0418">Kinase</keyword>
<keyword id="KW-0436">Ligase</keyword>
<keyword id="KW-0511">Multifunctional enzyme</keyword>
<keyword id="KW-0547">Nucleotide-binding</keyword>
<keyword id="KW-0566">Pantothenate biosynthesis</keyword>
<keyword id="KW-1185">Reference proteome</keyword>
<keyword id="KW-0808">Transferase</keyword>
<name>PANCY_SYNY3</name>
<organism>
    <name type="scientific">Synechocystis sp. (strain ATCC 27184 / PCC 6803 / Kazusa)</name>
    <dbReference type="NCBI Taxonomy" id="1111708"/>
    <lineage>
        <taxon>Bacteria</taxon>
        <taxon>Bacillati</taxon>
        <taxon>Cyanobacteriota</taxon>
        <taxon>Cyanophyceae</taxon>
        <taxon>Synechococcales</taxon>
        <taxon>Merismopediaceae</taxon>
        <taxon>Synechocystis</taxon>
    </lineage>
</organism>
<reference key="1">
    <citation type="journal article" date="1998" name="Plant Mol. Biol.">
        <title>Cloning, characterization and expression of carbonic anhydrase from the cyanobacterium Synechocystis PCC6803.</title>
        <authorList>
            <person name="So A.K.C."/>
            <person name="Espie G.S."/>
        </authorList>
    </citation>
    <scope>NUCLEOTIDE SEQUENCE [GENOMIC DNA]</scope>
</reference>
<reference key="2">
    <citation type="journal article" date="1996" name="DNA Res.">
        <title>Sequence analysis of the genome of the unicellular cyanobacterium Synechocystis sp. strain PCC6803. II. Sequence determination of the entire genome and assignment of potential protein-coding regions.</title>
        <authorList>
            <person name="Kaneko T."/>
            <person name="Sato S."/>
            <person name="Kotani H."/>
            <person name="Tanaka A."/>
            <person name="Asamizu E."/>
            <person name="Nakamura Y."/>
            <person name="Miyajima N."/>
            <person name="Hirosawa M."/>
            <person name="Sugiura M."/>
            <person name="Sasamoto S."/>
            <person name="Kimura T."/>
            <person name="Hosouchi T."/>
            <person name="Matsuno A."/>
            <person name="Muraki A."/>
            <person name="Nakazaki N."/>
            <person name="Naruo K."/>
            <person name="Okumura S."/>
            <person name="Shimpo S."/>
            <person name="Takeuchi C."/>
            <person name="Wada T."/>
            <person name="Watanabe A."/>
            <person name="Yamada M."/>
            <person name="Yasuda M."/>
            <person name="Tabata S."/>
        </authorList>
    </citation>
    <scope>NUCLEOTIDE SEQUENCE [LARGE SCALE GENOMIC DNA]</scope>
    <source>
        <strain>ATCC 27184 / PCC 6803 / Kazusa</strain>
    </source>
</reference>